<feature type="chain" id="PRO_0000257039" description="Probable transcriptional regulatory protein BTH_I1015">
    <location>
        <begin position="1"/>
        <end position="242"/>
    </location>
</feature>
<accession>Q2SZT0</accession>
<organism>
    <name type="scientific">Burkholderia thailandensis (strain ATCC 700388 / DSM 13276 / CCUG 48851 / CIP 106301 / E264)</name>
    <dbReference type="NCBI Taxonomy" id="271848"/>
    <lineage>
        <taxon>Bacteria</taxon>
        <taxon>Pseudomonadati</taxon>
        <taxon>Pseudomonadota</taxon>
        <taxon>Betaproteobacteria</taxon>
        <taxon>Burkholderiales</taxon>
        <taxon>Burkholderiaceae</taxon>
        <taxon>Burkholderia</taxon>
        <taxon>pseudomallei group</taxon>
    </lineage>
</organism>
<evidence type="ECO:0000255" key="1">
    <source>
        <dbReference type="HAMAP-Rule" id="MF_00693"/>
    </source>
</evidence>
<protein>
    <recommendedName>
        <fullName evidence="1">Probable transcriptional regulatory protein BTH_I1015</fullName>
    </recommendedName>
</protein>
<sequence>MAGHSKWANIKHKKAAADAKRGKIWTRLIKEIQVAARLGGGDANSNPRLRLAVDKAADANMPKDNVKRAIDRGVGGADGANYEEIRYEGYGIGGAAIIVDTLTDNRTRTVAEVRHAFSKFGGNMGTDGSVAFMFDHVGQFLFAPGTSEDALMEAALEAGANDVNTNDDGSIEVLCDWQEFSKVKDALEAGGFKAELAEVTMKPQNEIEFTGEDAVKMQKLLDALENLDDVQDVYTNAVVIEE</sequence>
<dbReference type="EMBL" id="CP000086">
    <property type="protein sequence ID" value="ABC39298.1"/>
    <property type="molecule type" value="Genomic_DNA"/>
</dbReference>
<dbReference type="RefSeq" id="WP_009892278.1">
    <property type="nucleotide sequence ID" value="NZ_CP008785.1"/>
</dbReference>
<dbReference type="SMR" id="Q2SZT0"/>
<dbReference type="GeneID" id="45120766"/>
<dbReference type="KEGG" id="bte:BTH_I1015"/>
<dbReference type="HOGENOM" id="CLU_062974_2_2_4"/>
<dbReference type="Proteomes" id="UP000001930">
    <property type="component" value="Chromosome I"/>
</dbReference>
<dbReference type="GO" id="GO:0005829">
    <property type="term" value="C:cytosol"/>
    <property type="evidence" value="ECO:0007669"/>
    <property type="project" value="TreeGrafter"/>
</dbReference>
<dbReference type="GO" id="GO:0003677">
    <property type="term" value="F:DNA binding"/>
    <property type="evidence" value="ECO:0007669"/>
    <property type="project" value="UniProtKB-UniRule"/>
</dbReference>
<dbReference type="GO" id="GO:0006355">
    <property type="term" value="P:regulation of DNA-templated transcription"/>
    <property type="evidence" value="ECO:0007669"/>
    <property type="project" value="UniProtKB-UniRule"/>
</dbReference>
<dbReference type="FunFam" id="1.10.10.200:FF:000001">
    <property type="entry name" value="Probable transcriptional regulatory protein YebC"/>
    <property type="match status" value="1"/>
</dbReference>
<dbReference type="FunFam" id="3.30.70.980:FF:000002">
    <property type="entry name" value="Probable transcriptional regulatory protein YebC"/>
    <property type="match status" value="1"/>
</dbReference>
<dbReference type="Gene3D" id="1.10.10.200">
    <property type="match status" value="1"/>
</dbReference>
<dbReference type="Gene3D" id="3.30.70.980">
    <property type="match status" value="2"/>
</dbReference>
<dbReference type="HAMAP" id="MF_00693">
    <property type="entry name" value="Transcrip_reg_TACO1"/>
    <property type="match status" value="1"/>
</dbReference>
<dbReference type="InterPro" id="IPR017856">
    <property type="entry name" value="Integrase-like_N"/>
</dbReference>
<dbReference type="InterPro" id="IPR048300">
    <property type="entry name" value="TACO1_YebC-like_2nd/3rd_dom"/>
</dbReference>
<dbReference type="InterPro" id="IPR049083">
    <property type="entry name" value="TACO1_YebC_N"/>
</dbReference>
<dbReference type="InterPro" id="IPR002876">
    <property type="entry name" value="Transcrip_reg_TACO1-like"/>
</dbReference>
<dbReference type="InterPro" id="IPR026564">
    <property type="entry name" value="Transcrip_reg_TACO1-like_dom3"/>
</dbReference>
<dbReference type="InterPro" id="IPR029072">
    <property type="entry name" value="YebC-like"/>
</dbReference>
<dbReference type="NCBIfam" id="NF001030">
    <property type="entry name" value="PRK00110.1"/>
    <property type="match status" value="1"/>
</dbReference>
<dbReference type="NCBIfam" id="NF009044">
    <property type="entry name" value="PRK12378.1"/>
    <property type="match status" value="1"/>
</dbReference>
<dbReference type="NCBIfam" id="TIGR01033">
    <property type="entry name" value="YebC/PmpR family DNA-binding transcriptional regulator"/>
    <property type="match status" value="1"/>
</dbReference>
<dbReference type="PANTHER" id="PTHR12532:SF6">
    <property type="entry name" value="TRANSCRIPTIONAL REGULATORY PROTEIN YEBC-RELATED"/>
    <property type="match status" value="1"/>
</dbReference>
<dbReference type="PANTHER" id="PTHR12532">
    <property type="entry name" value="TRANSLATIONAL ACTIVATOR OF CYTOCHROME C OXIDASE 1"/>
    <property type="match status" value="1"/>
</dbReference>
<dbReference type="Pfam" id="PF20772">
    <property type="entry name" value="TACO1_YebC_N"/>
    <property type="match status" value="1"/>
</dbReference>
<dbReference type="Pfam" id="PF01709">
    <property type="entry name" value="Transcrip_reg"/>
    <property type="match status" value="1"/>
</dbReference>
<dbReference type="SUPFAM" id="SSF75625">
    <property type="entry name" value="YebC-like"/>
    <property type="match status" value="1"/>
</dbReference>
<proteinExistence type="inferred from homology"/>
<gene>
    <name type="ordered locus">BTH_I1015</name>
</gene>
<keyword id="KW-0963">Cytoplasm</keyword>
<keyword id="KW-0238">DNA-binding</keyword>
<keyword id="KW-0804">Transcription</keyword>
<keyword id="KW-0805">Transcription regulation</keyword>
<comment type="subcellular location">
    <subcellularLocation>
        <location evidence="1">Cytoplasm</location>
    </subcellularLocation>
</comment>
<comment type="similarity">
    <text evidence="1">Belongs to the TACO1 family.</text>
</comment>
<name>Y1015_BURTA</name>
<reference key="1">
    <citation type="journal article" date="2005" name="BMC Genomics">
        <title>Bacterial genome adaptation to niches: divergence of the potential virulence genes in three Burkholderia species of different survival strategies.</title>
        <authorList>
            <person name="Kim H.S."/>
            <person name="Schell M.A."/>
            <person name="Yu Y."/>
            <person name="Ulrich R.L."/>
            <person name="Sarria S.H."/>
            <person name="Nierman W.C."/>
            <person name="DeShazer D."/>
        </authorList>
    </citation>
    <scope>NUCLEOTIDE SEQUENCE [LARGE SCALE GENOMIC DNA]</scope>
    <source>
        <strain>ATCC 700388 / DSM 13276 / CCUG 48851 / CIP 106301 / E264</strain>
    </source>
</reference>